<reference key="1">
    <citation type="submission" date="2008-04" db="EMBL/GenBank/DDBJ databases">
        <title>Complete sequence of Yersinia pseudotuberculosis PB1/+.</title>
        <authorList>
            <person name="Copeland A."/>
            <person name="Lucas S."/>
            <person name="Lapidus A."/>
            <person name="Glavina del Rio T."/>
            <person name="Dalin E."/>
            <person name="Tice H."/>
            <person name="Bruce D."/>
            <person name="Goodwin L."/>
            <person name="Pitluck S."/>
            <person name="Munk A.C."/>
            <person name="Brettin T."/>
            <person name="Detter J.C."/>
            <person name="Han C."/>
            <person name="Tapia R."/>
            <person name="Schmutz J."/>
            <person name="Larimer F."/>
            <person name="Land M."/>
            <person name="Hauser L."/>
            <person name="Challacombe J.F."/>
            <person name="Green L."/>
            <person name="Lindler L.E."/>
            <person name="Nikolich M.P."/>
            <person name="Richardson P."/>
        </authorList>
    </citation>
    <scope>NUCLEOTIDE SEQUENCE [LARGE SCALE GENOMIC DNA]</scope>
    <source>
        <strain>PB1/+</strain>
    </source>
</reference>
<accession>B2K3Y3</accession>
<evidence type="ECO:0000255" key="1">
    <source>
        <dbReference type="HAMAP-Rule" id="MF_00048"/>
    </source>
</evidence>
<feature type="chain" id="PRO_1000091276" description="UPF0102 protein YPTS_3679">
    <location>
        <begin position="1"/>
        <end position="117"/>
    </location>
</feature>
<protein>
    <recommendedName>
        <fullName evidence="1">UPF0102 protein YPTS_3679</fullName>
    </recommendedName>
</protein>
<name>Y3679_YERPB</name>
<comment type="similarity">
    <text evidence="1">Belongs to the UPF0102 family.</text>
</comment>
<proteinExistence type="inferred from homology"/>
<gene>
    <name type="ordered locus">YPTS_3679</name>
</gene>
<sequence>MSQRDTGAHYENLARRHLERAGLVFQAANVAFRGGEIDLIMRDGDAWVFVEVRFRRNDLFGGAAASITPRKQQRLHLAAAVWLAQRGASFATTSCRFDVVAITGNQLEWLPNAFNTD</sequence>
<organism>
    <name type="scientific">Yersinia pseudotuberculosis serotype IB (strain PB1/+)</name>
    <dbReference type="NCBI Taxonomy" id="502801"/>
    <lineage>
        <taxon>Bacteria</taxon>
        <taxon>Pseudomonadati</taxon>
        <taxon>Pseudomonadota</taxon>
        <taxon>Gammaproteobacteria</taxon>
        <taxon>Enterobacterales</taxon>
        <taxon>Yersiniaceae</taxon>
        <taxon>Yersinia</taxon>
    </lineage>
</organism>
<dbReference type="EMBL" id="CP001048">
    <property type="protein sequence ID" value="ACC90632.1"/>
    <property type="molecule type" value="Genomic_DNA"/>
</dbReference>
<dbReference type="RefSeq" id="WP_002210147.1">
    <property type="nucleotide sequence ID" value="NZ_CP009780.1"/>
</dbReference>
<dbReference type="SMR" id="B2K3Y3"/>
<dbReference type="KEGG" id="ypb:YPTS_3679"/>
<dbReference type="PATRIC" id="fig|502801.10.peg.3134"/>
<dbReference type="GO" id="GO:0003676">
    <property type="term" value="F:nucleic acid binding"/>
    <property type="evidence" value="ECO:0007669"/>
    <property type="project" value="InterPro"/>
</dbReference>
<dbReference type="CDD" id="cd20736">
    <property type="entry name" value="PoNe_Nuclease"/>
    <property type="match status" value="1"/>
</dbReference>
<dbReference type="Gene3D" id="3.40.1350.10">
    <property type="match status" value="1"/>
</dbReference>
<dbReference type="HAMAP" id="MF_00048">
    <property type="entry name" value="UPF0102"/>
    <property type="match status" value="1"/>
</dbReference>
<dbReference type="InterPro" id="IPR011335">
    <property type="entry name" value="Restrct_endonuc-II-like"/>
</dbReference>
<dbReference type="InterPro" id="IPR011856">
    <property type="entry name" value="tRNA_endonuc-like_dom_sf"/>
</dbReference>
<dbReference type="InterPro" id="IPR003509">
    <property type="entry name" value="UPF0102_YraN-like"/>
</dbReference>
<dbReference type="NCBIfam" id="NF009150">
    <property type="entry name" value="PRK12497.1-3"/>
    <property type="match status" value="1"/>
</dbReference>
<dbReference type="NCBIfam" id="TIGR00252">
    <property type="entry name" value="YraN family protein"/>
    <property type="match status" value="1"/>
</dbReference>
<dbReference type="PANTHER" id="PTHR34039">
    <property type="entry name" value="UPF0102 PROTEIN YRAN"/>
    <property type="match status" value="1"/>
</dbReference>
<dbReference type="PANTHER" id="PTHR34039:SF1">
    <property type="entry name" value="UPF0102 PROTEIN YRAN"/>
    <property type="match status" value="1"/>
</dbReference>
<dbReference type="Pfam" id="PF02021">
    <property type="entry name" value="UPF0102"/>
    <property type="match status" value="1"/>
</dbReference>
<dbReference type="SUPFAM" id="SSF52980">
    <property type="entry name" value="Restriction endonuclease-like"/>
    <property type="match status" value="1"/>
</dbReference>